<comment type="function">
    <text evidence="1">Catalyzes the synthesis of the hydroxymethylpyrimidine phosphate (HMP-P) moiety of thiamine from aminoimidazole ribotide (AIR) in a radical S-adenosyl-L-methionine (SAM)-dependent reaction.</text>
</comment>
<comment type="catalytic activity">
    <reaction evidence="1 2">
        <text>5-amino-1-(5-phospho-beta-D-ribosyl)imidazole + S-adenosyl-L-methionine = 4-amino-2-methyl-5-(phosphooxymethyl)pyrimidine + CO + 5'-deoxyadenosine + formate + L-methionine + 3 H(+)</text>
        <dbReference type="Rhea" id="RHEA:24840"/>
        <dbReference type="ChEBI" id="CHEBI:15378"/>
        <dbReference type="ChEBI" id="CHEBI:15740"/>
        <dbReference type="ChEBI" id="CHEBI:17245"/>
        <dbReference type="ChEBI" id="CHEBI:17319"/>
        <dbReference type="ChEBI" id="CHEBI:57844"/>
        <dbReference type="ChEBI" id="CHEBI:58354"/>
        <dbReference type="ChEBI" id="CHEBI:59789"/>
        <dbReference type="ChEBI" id="CHEBI:137981"/>
        <dbReference type="EC" id="4.1.99.17"/>
    </reaction>
</comment>
<comment type="cofactor">
    <cofactor evidence="1 3">
        <name>[4Fe-4S] cluster</name>
        <dbReference type="ChEBI" id="CHEBI:49883"/>
    </cofactor>
    <text evidence="1 3">Binds 1 [4Fe-4S] cluster per subunit. The cluster is coordinated with 3 cysteines and an exchangeable S-adenosyl-L-methionine.</text>
</comment>
<comment type="pathway">
    <text>Cofactor biosynthesis; thiamine diphosphate biosynthesis.</text>
</comment>
<comment type="subunit">
    <text evidence="1">Homodimer.</text>
</comment>
<comment type="similarity">
    <text evidence="4">Belongs to the ThiC family.</text>
</comment>
<reference key="1">
    <citation type="journal article" date="2001" name="Proc. Natl. Acad. Sci. U.S.A.">
        <title>Complete genome sequence of Caulobacter crescentus.</title>
        <authorList>
            <person name="Nierman W.C."/>
            <person name="Feldblyum T.V."/>
            <person name="Laub M.T."/>
            <person name="Paulsen I.T."/>
            <person name="Nelson K.E."/>
            <person name="Eisen J.A."/>
            <person name="Heidelberg J.F."/>
            <person name="Alley M.R.K."/>
            <person name="Ohta N."/>
            <person name="Maddock J.R."/>
            <person name="Potocka I."/>
            <person name="Nelson W.C."/>
            <person name="Newton A."/>
            <person name="Stephens C."/>
            <person name="Phadke N.D."/>
            <person name="Ely B."/>
            <person name="DeBoy R.T."/>
            <person name="Dodson R.J."/>
            <person name="Durkin A.S."/>
            <person name="Gwinn M.L."/>
            <person name="Haft D.H."/>
            <person name="Kolonay J.F."/>
            <person name="Smit J."/>
            <person name="Craven M.B."/>
            <person name="Khouri H.M."/>
            <person name="Shetty J."/>
            <person name="Berry K.J."/>
            <person name="Utterback T.R."/>
            <person name="Tran K."/>
            <person name="Wolf A.M."/>
            <person name="Vamathevan J.J."/>
            <person name="Ermolaeva M.D."/>
            <person name="White O."/>
            <person name="Salzberg S.L."/>
            <person name="Venter J.C."/>
            <person name="Shapiro L."/>
            <person name="Fraser C.M."/>
        </authorList>
    </citation>
    <scope>NUCLEOTIDE SEQUENCE [LARGE SCALE GENOMIC DNA]</scope>
    <source>
        <strain>ATCC 19089 / CIP 103742 / CB 15</strain>
    </source>
</reference>
<reference key="2">
    <citation type="journal article" date="2010" name="Angew. Chem. Int. Ed.">
        <title>A 'radical dance' in thiamin biosynthesis: mechanistic analysis of the bacterial hydroxymethylpyrimidine phosphate synthase.</title>
        <authorList>
            <person name="Chatterjee A."/>
            <person name="Hazra A.B."/>
            <person name="Abdelwahed S."/>
            <person name="Hilmey D.G."/>
            <person name="Begley T.P."/>
        </authorList>
    </citation>
    <scope>CATALYTIC ACTIVITY</scope>
    <scope>REACTION MECHANISM</scope>
</reference>
<reference evidence="5 6 7" key="3">
    <citation type="journal article" date="2008" name="Nat. Chem. Biol.">
        <title>Reconstitution of ThiC in thiamine pyrimidine biosynthesis expands the radical SAM superfamily.</title>
        <authorList>
            <person name="Chatterjee A."/>
            <person name="Li Y."/>
            <person name="Zhang Y."/>
            <person name="Grove T.L."/>
            <person name="Lee M."/>
            <person name="Krebs C."/>
            <person name="Booker S.J."/>
            <person name="Begley T.P."/>
            <person name="Ealick S.E."/>
        </authorList>
    </citation>
    <scope>X-RAY CRYSTALLOGRAPHY (2.10 ANGSTROMS) IN COMPLEXES WITH SUBSTRATE AND ZINC</scope>
    <scope>FUNCTION</scope>
    <scope>CATALYTIC ACTIVITY</scope>
    <scope>EPR SPECTROSCOPY</scope>
    <scope>MOSSBAUER SPECTROSCOPY</scope>
    <scope>COFACTOR</scope>
    <scope>SUBUNIT</scope>
</reference>
<reference key="4">
    <citation type="journal article" date="2015" name="Nat. Commun.">
        <title>Non-canonical active site architecture of the radical SAM thiamin pyrimidine synthase.</title>
        <authorList>
            <person name="Fenwick M.K."/>
            <person name="Mehta A.P."/>
            <person name="Zhang Y."/>
            <person name="Abdelwahed S.H."/>
            <person name="Begley T.P."/>
            <person name="Ealick S.E."/>
        </authorList>
    </citation>
    <scope>X-RAY CRYSTALLOGRAPHY (2.93 ANGSTROMS) IN COMPLEX WITH IRON-SULFUR (4FE-4S)</scope>
    <scope>COFACTOR</scope>
    <scope>MUTAGENESIS OF HIS-417 AND HIS-481</scope>
</reference>
<sequence>MNIQSTIKAVAETISTGPIPGSRKVYQAGELFPELRVPFREVAVHPSANEPPVTIYDPSGPYSDPAIQIDIEKGLPRTREALVVARGDVEEVADPRQVKPEDNGFAQGKHLAPEFPDTGRKIYRAKPGKLVTQLEYARAGIITAEMEYVAIRENLRREQDRPCVRDGEDFGASIPDFVTPEFVRQEIARGRAIIPANINHGELEPMAIGRNFLVKINANIGNSAVLSTVADEVDKLVWATRWGADTVMDLSTGRNIHNIRDWIIRNSSVPIGTVPIYQALEKVNGVAEDLNWEVFRDTLIEQCEQGVDYFTIHAGVRLPFIPMTAKRVTGIVSRGGSIMAKWCLAHHKENFLYERFDEICEIMRAYDVSFSLGDGLRPGSTADANDEAQFSELRTLGELTKVAWKHGVQVMIEGPGHVAMHKIKANMDEQLKHCHEAPFYTLGPLTTDIAPGYDHITSAIGAAMIGWFGTAMLCYVTPKEHLGLPDRDDVKTGVITYKLAAHAADLAKGHPGAAMWDDAISRARFEFRWEDQFNLGLDPETARKFHDETLPKEAHKTAHFCSMCGPKFCSMKISQEVRDFAAGKAPNSAELGMAEMSEKFREQGSEIYLKTE</sequence>
<protein>
    <recommendedName>
        <fullName>Phosphomethylpyrimidine synthase</fullName>
        <ecNumber evidence="1 2">4.1.99.17</ecNumber>
    </recommendedName>
    <alternativeName>
        <fullName>Hydroxymethylpyrimidine phosphate synthase</fullName>
        <shortName>HMP-P synthase</shortName>
        <shortName>HMP-phosphate synthase</shortName>
        <shortName>HMPP synthase</shortName>
    </alternativeName>
    <alternativeName>
        <fullName>Thiamine biosynthesis protein ThiC</fullName>
    </alternativeName>
</protein>
<name>THIC_CAUVC</name>
<feature type="chain" id="PRO_0000152793" description="Phosphomethylpyrimidine synthase">
    <location>
        <begin position="1"/>
        <end position="612"/>
    </location>
</feature>
<feature type="binding site" evidence="1 6">
    <location>
        <position position="219"/>
    </location>
    <ligand>
        <name>substrate</name>
    </ligand>
</feature>
<feature type="binding site" evidence="1 6">
    <location>
        <position position="248"/>
    </location>
    <ligand>
        <name>substrate</name>
    </ligand>
</feature>
<feature type="binding site" evidence="1 6">
    <location>
        <position position="277"/>
    </location>
    <ligand>
        <name>substrate</name>
    </ligand>
</feature>
<feature type="binding site" evidence="1 6">
    <location>
        <position position="313"/>
    </location>
    <ligand>
        <name>substrate</name>
    </ligand>
</feature>
<feature type="binding site" evidence="1 6">
    <location>
        <begin position="333"/>
        <end position="335"/>
    </location>
    <ligand>
        <name>substrate</name>
    </ligand>
</feature>
<feature type="binding site" evidence="1 6">
    <location>
        <begin position="374"/>
        <end position="377"/>
    </location>
    <ligand>
        <name>substrate</name>
    </ligand>
</feature>
<feature type="binding site" evidence="1 6">
    <location>
        <position position="413"/>
    </location>
    <ligand>
        <name>substrate</name>
    </ligand>
</feature>
<feature type="binding site" evidence="1 5">
    <location>
        <position position="417"/>
    </location>
    <ligand>
        <name>Zn(2+)</name>
        <dbReference type="ChEBI" id="CHEBI:29105"/>
    </ligand>
</feature>
<feature type="binding site" evidence="1 6">
    <location>
        <position position="440"/>
    </location>
    <ligand>
        <name>substrate</name>
    </ligand>
</feature>
<feature type="binding site" evidence="1 5">
    <location>
        <position position="481"/>
    </location>
    <ligand>
        <name>Zn(2+)</name>
        <dbReference type="ChEBI" id="CHEBI:29105"/>
    </ligand>
</feature>
<feature type="binding site" evidence="3 8">
    <location>
        <position position="561"/>
    </location>
    <ligand>
        <name>[4Fe-4S] cluster</name>
        <dbReference type="ChEBI" id="CHEBI:49883"/>
        <note>4Fe-4S-S-AdoMet</note>
    </ligand>
</feature>
<feature type="binding site" evidence="3 8">
    <location>
        <position position="564"/>
    </location>
    <ligand>
        <name>[4Fe-4S] cluster</name>
        <dbReference type="ChEBI" id="CHEBI:49883"/>
        <note>4Fe-4S-S-AdoMet</note>
    </ligand>
</feature>
<feature type="binding site" evidence="3 8">
    <location>
        <position position="569"/>
    </location>
    <ligand>
        <name>[4Fe-4S] cluster</name>
        <dbReference type="ChEBI" id="CHEBI:49883"/>
        <note>4Fe-4S-S-AdoMet</note>
    </ligand>
</feature>
<feature type="mutagenesis site" description="5-fold reduction in catalytic activity." evidence="3">
    <original>H</original>
    <variation>A</variation>
    <location>
        <position position="417"/>
    </location>
</feature>
<feature type="mutagenesis site" description="5-fold reduction in catalytic activity." evidence="3">
    <original>H</original>
    <variation>A</variation>
    <location>
        <position position="481"/>
    </location>
</feature>
<feature type="helix" evidence="9">
    <location>
        <begin position="6"/>
        <end position="13"/>
    </location>
</feature>
<feature type="strand" evidence="9">
    <location>
        <begin position="23"/>
        <end position="28"/>
    </location>
</feature>
<feature type="strand" evidence="9">
    <location>
        <begin position="30"/>
        <end position="32"/>
    </location>
</feature>
<feature type="strand" evidence="9">
    <location>
        <begin position="36"/>
        <end position="42"/>
    </location>
</feature>
<feature type="helix" evidence="9">
    <location>
        <begin position="46"/>
        <end position="48"/>
    </location>
</feature>
<feature type="strand" evidence="9">
    <location>
        <begin position="53"/>
        <end position="55"/>
    </location>
</feature>
<feature type="helix" evidence="9">
    <location>
        <begin position="60"/>
        <end position="63"/>
    </location>
</feature>
<feature type="turn" evidence="9">
    <location>
        <begin position="71"/>
        <end position="73"/>
    </location>
</feature>
<feature type="helix" evidence="9">
    <location>
        <begin position="80"/>
        <end position="85"/>
    </location>
</feature>
<feature type="strand" evidence="9">
    <location>
        <begin position="89"/>
        <end position="91"/>
    </location>
</feature>
<feature type="helix" evidence="10">
    <location>
        <begin position="100"/>
        <end position="103"/>
    </location>
</feature>
<feature type="helix" evidence="10">
    <location>
        <begin position="108"/>
        <end position="110"/>
    </location>
</feature>
<feature type="strand" evidence="9">
    <location>
        <begin position="123"/>
        <end position="125"/>
    </location>
</feature>
<feature type="helix" evidence="9">
    <location>
        <begin position="133"/>
        <end position="138"/>
    </location>
</feature>
<feature type="helix" evidence="9">
    <location>
        <begin position="144"/>
        <end position="154"/>
    </location>
</feature>
<feature type="strand" evidence="9">
    <location>
        <begin position="159"/>
        <end position="161"/>
    </location>
</feature>
<feature type="helix" evidence="9">
    <location>
        <begin position="180"/>
        <end position="188"/>
    </location>
</feature>
<feature type="strand" evidence="9">
    <location>
        <begin position="191"/>
        <end position="193"/>
    </location>
</feature>
<feature type="strand" evidence="9">
    <location>
        <begin position="215"/>
        <end position="220"/>
    </location>
</feature>
<feature type="helix" evidence="9">
    <location>
        <begin position="229"/>
        <end position="241"/>
    </location>
</feature>
<feature type="strand" evidence="9">
    <location>
        <begin position="245"/>
        <end position="249"/>
    </location>
</feature>
<feature type="strand" evidence="10">
    <location>
        <begin position="253"/>
        <end position="255"/>
    </location>
</feature>
<feature type="helix" evidence="9">
    <location>
        <begin position="256"/>
        <end position="264"/>
    </location>
</feature>
<feature type="strand" evidence="9">
    <location>
        <begin position="271"/>
        <end position="273"/>
    </location>
</feature>
<feature type="helix" evidence="9">
    <location>
        <begin position="275"/>
        <end position="282"/>
    </location>
</feature>
<feature type="turn" evidence="9">
    <location>
        <begin position="283"/>
        <end position="285"/>
    </location>
</feature>
<feature type="helix" evidence="9">
    <location>
        <begin position="287"/>
        <end position="289"/>
    </location>
</feature>
<feature type="helix" evidence="9">
    <location>
        <begin position="292"/>
        <end position="305"/>
    </location>
</feature>
<feature type="strand" evidence="9">
    <location>
        <begin position="309"/>
        <end position="312"/>
    </location>
</feature>
<feature type="helix" evidence="9">
    <location>
        <begin position="318"/>
        <end position="324"/>
    </location>
</feature>
<feature type="strand" evidence="9">
    <location>
        <begin position="327"/>
        <end position="329"/>
    </location>
</feature>
<feature type="helix" evidence="9">
    <location>
        <begin position="334"/>
        <end position="346"/>
    </location>
</feature>
<feature type="helix" evidence="9">
    <location>
        <begin position="351"/>
        <end position="354"/>
    </location>
</feature>
<feature type="helix" evidence="9">
    <location>
        <begin position="356"/>
        <end position="363"/>
    </location>
</feature>
<feature type="turn" evidence="9">
    <location>
        <begin position="364"/>
        <end position="367"/>
    </location>
</feature>
<feature type="strand" evidence="9">
    <location>
        <begin position="369"/>
        <end position="372"/>
    </location>
</feature>
<feature type="helix" evidence="9">
    <location>
        <begin position="381"/>
        <end position="383"/>
    </location>
</feature>
<feature type="helix" evidence="9">
    <location>
        <begin position="387"/>
        <end position="405"/>
    </location>
</feature>
<feature type="strand" evidence="9">
    <location>
        <begin position="410"/>
        <end position="413"/>
    </location>
</feature>
<feature type="helix" evidence="9">
    <location>
        <begin position="420"/>
        <end position="422"/>
    </location>
</feature>
<feature type="helix" evidence="9">
    <location>
        <begin position="423"/>
        <end position="433"/>
    </location>
</feature>
<feature type="turn" evidence="9">
    <location>
        <begin position="434"/>
        <end position="436"/>
    </location>
</feature>
<feature type="strand" evidence="9">
    <location>
        <begin position="439"/>
        <end position="442"/>
    </location>
</feature>
<feature type="helix" evidence="9">
    <location>
        <begin position="454"/>
        <end position="468"/>
    </location>
</feature>
<feature type="strand" evidence="9">
    <location>
        <begin position="472"/>
        <end position="474"/>
    </location>
</feature>
<feature type="turn" evidence="9">
    <location>
        <begin position="478"/>
        <end position="482"/>
    </location>
</feature>
<feature type="helix" evidence="9">
    <location>
        <begin position="487"/>
        <end position="508"/>
    </location>
</feature>
<feature type="helix" evidence="9">
    <location>
        <begin position="513"/>
        <end position="525"/>
    </location>
</feature>
<feature type="helix" evidence="9">
    <location>
        <begin position="529"/>
        <end position="534"/>
    </location>
</feature>
<feature type="strand" evidence="10">
    <location>
        <begin position="535"/>
        <end position="538"/>
    </location>
</feature>
<feature type="helix" evidence="9">
    <location>
        <begin position="539"/>
        <end position="545"/>
    </location>
</feature>
<feature type="strand" evidence="10">
    <location>
        <begin position="548"/>
        <end position="550"/>
    </location>
</feature>
<feature type="strand" evidence="10">
    <location>
        <begin position="557"/>
        <end position="559"/>
    </location>
</feature>
<feature type="helix" evidence="10">
    <location>
        <begin position="560"/>
        <end position="563"/>
    </location>
</feature>
<feature type="helix" evidence="10">
    <location>
        <begin position="568"/>
        <end position="576"/>
    </location>
</feature>
<feature type="turn" evidence="10">
    <location>
        <begin position="580"/>
        <end position="583"/>
    </location>
</feature>
<feature type="helix" evidence="10">
    <location>
        <begin position="590"/>
        <end position="602"/>
    </location>
</feature>
<feature type="strand" evidence="10">
    <location>
        <begin position="607"/>
        <end position="610"/>
    </location>
</feature>
<evidence type="ECO:0000269" key="1">
    <source>
    </source>
</evidence>
<evidence type="ECO:0000269" key="2">
    <source>
    </source>
</evidence>
<evidence type="ECO:0000269" key="3">
    <source>
    </source>
</evidence>
<evidence type="ECO:0000305" key="4"/>
<evidence type="ECO:0007744" key="5">
    <source>
        <dbReference type="PDB" id="3EPM"/>
    </source>
</evidence>
<evidence type="ECO:0007744" key="6">
    <source>
        <dbReference type="PDB" id="3EPN"/>
    </source>
</evidence>
<evidence type="ECO:0007744" key="7">
    <source>
        <dbReference type="PDB" id="3EPO"/>
    </source>
</evidence>
<evidence type="ECO:0007744" key="8">
    <source>
        <dbReference type="PDB" id="4S2A"/>
    </source>
</evidence>
<evidence type="ECO:0007829" key="9">
    <source>
        <dbReference type="PDB" id="3EPO"/>
    </source>
</evidence>
<evidence type="ECO:0007829" key="10">
    <source>
        <dbReference type="PDB" id="4S2A"/>
    </source>
</evidence>
<proteinExistence type="evidence at protein level"/>
<accession>Q9A6Q5</accession>
<dbReference type="EC" id="4.1.99.17" evidence="1 2"/>
<dbReference type="EMBL" id="AE005673">
    <property type="protein sequence ID" value="AAK24004.1"/>
    <property type="molecule type" value="Genomic_DNA"/>
</dbReference>
<dbReference type="PIR" id="H87500">
    <property type="entry name" value="H87500"/>
</dbReference>
<dbReference type="RefSeq" id="NP_420836.1">
    <property type="nucleotide sequence ID" value="NC_002696.2"/>
</dbReference>
<dbReference type="RefSeq" id="WP_010919895.1">
    <property type="nucleotide sequence ID" value="NC_002696.2"/>
</dbReference>
<dbReference type="PDB" id="3EPM">
    <property type="method" value="X-ray"/>
    <property type="resolution" value="2.79 A"/>
    <property type="chains" value="A/B=1-612"/>
</dbReference>
<dbReference type="PDB" id="3EPN">
    <property type="method" value="X-ray"/>
    <property type="resolution" value="2.11 A"/>
    <property type="chains" value="A/B=1-612"/>
</dbReference>
<dbReference type="PDB" id="3EPO">
    <property type="method" value="X-ray"/>
    <property type="resolution" value="2.10 A"/>
    <property type="chains" value="A/B=1-612"/>
</dbReference>
<dbReference type="PDB" id="4S2A">
    <property type="method" value="X-ray"/>
    <property type="resolution" value="2.93 A"/>
    <property type="chains" value="A=1-612"/>
</dbReference>
<dbReference type="PDBsum" id="3EPM"/>
<dbReference type="PDBsum" id="3EPN"/>
<dbReference type="PDBsum" id="3EPO"/>
<dbReference type="PDBsum" id="4S2A"/>
<dbReference type="SMR" id="Q9A6Q5"/>
<dbReference type="STRING" id="190650.CC_2029"/>
<dbReference type="EnsemblBacteria" id="AAK24004">
    <property type="protein sequence ID" value="AAK24004"/>
    <property type="gene ID" value="CC_2029"/>
</dbReference>
<dbReference type="KEGG" id="ccr:CC_2029"/>
<dbReference type="PATRIC" id="fig|190650.5.peg.2049"/>
<dbReference type="eggNOG" id="COG0422">
    <property type="taxonomic scope" value="Bacteria"/>
</dbReference>
<dbReference type="HOGENOM" id="CLU_013181_2_1_5"/>
<dbReference type="BioCyc" id="CAULO:CC2029-MONOMER"/>
<dbReference type="BioCyc" id="MetaCyc:MONOMER-14897"/>
<dbReference type="BRENDA" id="4.1.99.17">
    <property type="organism ID" value="1218"/>
</dbReference>
<dbReference type="UniPathway" id="UPA00060"/>
<dbReference type="EvolutionaryTrace" id="Q9A6Q5"/>
<dbReference type="Proteomes" id="UP000001816">
    <property type="component" value="Chromosome"/>
</dbReference>
<dbReference type="GO" id="GO:0005829">
    <property type="term" value="C:cytosol"/>
    <property type="evidence" value="ECO:0007669"/>
    <property type="project" value="TreeGrafter"/>
</dbReference>
<dbReference type="GO" id="GO:0051539">
    <property type="term" value="F:4 iron, 4 sulfur cluster binding"/>
    <property type="evidence" value="ECO:0000314"/>
    <property type="project" value="UniProtKB"/>
</dbReference>
<dbReference type="GO" id="GO:0070284">
    <property type="term" value="F:phosphomethylpyrimidine synthase activity"/>
    <property type="evidence" value="ECO:0000314"/>
    <property type="project" value="UniProtKB"/>
</dbReference>
<dbReference type="GO" id="GO:0008270">
    <property type="term" value="F:zinc ion binding"/>
    <property type="evidence" value="ECO:0007669"/>
    <property type="project" value="UniProtKB-UniRule"/>
</dbReference>
<dbReference type="GO" id="GO:0009228">
    <property type="term" value="P:thiamine biosynthetic process"/>
    <property type="evidence" value="ECO:0000314"/>
    <property type="project" value="UniProtKB"/>
</dbReference>
<dbReference type="GO" id="GO:0009229">
    <property type="term" value="P:thiamine diphosphate biosynthetic process"/>
    <property type="evidence" value="ECO:0007669"/>
    <property type="project" value="UniProtKB-UniRule"/>
</dbReference>
<dbReference type="FunFam" id="3.20.20.540:FF:000001">
    <property type="entry name" value="Phosphomethylpyrimidine synthase"/>
    <property type="match status" value="1"/>
</dbReference>
<dbReference type="Gene3D" id="6.10.250.620">
    <property type="match status" value="1"/>
</dbReference>
<dbReference type="Gene3D" id="3.20.20.540">
    <property type="entry name" value="Radical SAM ThiC family, central domain"/>
    <property type="match status" value="1"/>
</dbReference>
<dbReference type="HAMAP" id="MF_00089">
    <property type="entry name" value="ThiC"/>
    <property type="match status" value="1"/>
</dbReference>
<dbReference type="InterPro" id="IPR037509">
    <property type="entry name" value="ThiC"/>
</dbReference>
<dbReference type="InterPro" id="IPR025747">
    <property type="entry name" value="ThiC-associated_dom"/>
</dbReference>
<dbReference type="InterPro" id="IPR038521">
    <property type="entry name" value="ThiC/Bza_core_dom"/>
</dbReference>
<dbReference type="InterPro" id="IPR002817">
    <property type="entry name" value="ThiC/BzaA/B"/>
</dbReference>
<dbReference type="NCBIfam" id="NF006763">
    <property type="entry name" value="PRK09284.1"/>
    <property type="match status" value="1"/>
</dbReference>
<dbReference type="NCBIfam" id="NF009895">
    <property type="entry name" value="PRK13352.1"/>
    <property type="match status" value="1"/>
</dbReference>
<dbReference type="NCBIfam" id="TIGR00190">
    <property type="entry name" value="thiC"/>
    <property type="match status" value="1"/>
</dbReference>
<dbReference type="PANTHER" id="PTHR30557:SF1">
    <property type="entry name" value="PHOSPHOMETHYLPYRIMIDINE SYNTHASE, CHLOROPLASTIC"/>
    <property type="match status" value="1"/>
</dbReference>
<dbReference type="PANTHER" id="PTHR30557">
    <property type="entry name" value="THIAMINE BIOSYNTHESIS PROTEIN THIC"/>
    <property type="match status" value="1"/>
</dbReference>
<dbReference type="Pfam" id="PF13667">
    <property type="entry name" value="ThiC-associated"/>
    <property type="match status" value="1"/>
</dbReference>
<dbReference type="Pfam" id="PF01964">
    <property type="entry name" value="ThiC_Rad_SAM"/>
    <property type="match status" value="1"/>
</dbReference>
<dbReference type="SFLD" id="SFLDF00407">
    <property type="entry name" value="phosphomethylpyrimidine_syntha"/>
    <property type="match status" value="1"/>
</dbReference>
<dbReference type="SFLD" id="SFLDG01114">
    <property type="entry name" value="phosphomethylpyrimidine_syntha"/>
    <property type="match status" value="1"/>
</dbReference>
<dbReference type="SFLD" id="SFLDS00113">
    <property type="entry name" value="Radical_SAM_Phosphomethylpyrim"/>
    <property type="match status" value="1"/>
</dbReference>
<organism>
    <name type="scientific">Caulobacter vibrioides (strain ATCC 19089 / CIP 103742 / CB 15)</name>
    <name type="common">Caulobacter crescentus</name>
    <dbReference type="NCBI Taxonomy" id="190650"/>
    <lineage>
        <taxon>Bacteria</taxon>
        <taxon>Pseudomonadati</taxon>
        <taxon>Pseudomonadota</taxon>
        <taxon>Alphaproteobacteria</taxon>
        <taxon>Caulobacterales</taxon>
        <taxon>Caulobacteraceae</taxon>
        <taxon>Caulobacter</taxon>
    </lineage>
</organism>
<keyword id="KW-0002">3D-structure</keyword>
<keyword id="KW-0004">4Fe-4S</keyword>
<keyword id="KW-0408">Iron</keyword>
<keyword id="KW-0411">Iron-sulfur</keyword>
<keyword id="KW-0456">Lyase</keyword>
<keyword id="KW-0479">Metal-binding</keyword>
<keyword id="KW-1185">Reference proteome</keyword>
<keyword id="KW-0949">S-adenosyl-L-methionine</keyword>
<keyword id="KW-0784">Thiamine biosynthesis</keyword>
<keyword id="KW-0862">Zinc</keyword>
<gene>
    <name type="primary">thiC</name>
    <name type="ordered locus">CC_2029</name>
</gene>